<protein>
    <recommendedName>
        <fullName>Superoxide dismutase [Cu-Zn]</fullName>
        <ecNumber>1.15.1.1</ecNumber>
    </recommendedName>
</protein>
<sequence length="152" mass="15211">MVKGVAVLSSSEGVSGTIYFTQEGDGPTTVTGNVSGLKPGPHGFHVHALGDTTNGCLSTGPHFNPAGKEHGAPDDEVRHAGDLGNVTVGEDGTAAFTIVDKQIPLTGPHSIIGRAVVVHADPDDLGKGGHELSKTTGNTGGRVACGINGLQG</sequence>
<reference key="1">
    <citation type="submission" date="1997-12" db="EMBL/GenBank/DDBJ databases">
        <title>Studies on SOD activity during plant development and the isolation and characterization of cDNA clones for SOD.</title>
        <authorList>
            <person name="Lim P.Y."/>
            <person name="Low K.W.R."/>
            <person name="Goh C.J."/>
            <person name="Kumar P.P."/>
        </authorList>
    </citation>
    <scope>NUCLEOTIDE SEQUENCE [MRNA]</scope>
</reference>
<keyword id="KW-0049">Antioxidant</keyword>
<keyword id="KW-0186">Copper</keyword>
<keyword id="KW-0963">Cytoplasm</keyword>
<keyword id="KW-1015">Disulfide bond</keyword>
<keyword id="KW-0479">Metal-binding</keyword>
<keyword id="KW-0560">Oxidoreductase</keyword>
<keyword id="KW-0862">Zinc</keyword>
<comment type="function">
    <text>Destroys radicals which are normally produced within the cells and which are toxic to biological systems.</text>
</comment>
<comment type="catalytic activity">
    <reaction>
        <text>2 superoxide + 2 H(+) = H2O2 + O2</text>
        <dbReference type="Rhea" id="RHEA:20696"/>
        <dbReference type="ChEBI" id="CHEBI:15378"/>
        <dbReference type="ChEBI" id="CHEBI:15379"/>
        <dbReference type="ChEBI" id="CHEBI:16240"/>
        <dbReference type="ChEBI" id="CHEBI:18421"/>
        <dbReference type="EC" id="1.15.1.1"/>
    </reaction>
</comment>
<comment type="cofactor">
    <cofactor evidence="1">
        <name>Cu cation</name>
        <dbReference type="ChEBI" id="CHEBI:23378"/>
    </cofactor>
    <text evidence="1">Binds 1 copper ion per subunit.</text>
</comment>
<comment type="cofactor">
    <cofactor evidence="1">
        <name>Zn(2+)</name>
        <dbReference type="ChEBI" id="CHEBI:29105"/>
    </cofactor>
    <text evidence="1">Binds 1 zinc ion per subunit.</text>
</comment>
<comment type="subunit">
    <text evidence="1">Homodimer.</text>
</comment>
<comment type="subcellular location">
    <subcellularLocation>
        <location>Cytoplasm</location>
    </subcellularLocation>
</comment>
<comment type="similarity">
    <text evidence="2">Belongs to the Cu-Zn superoxide dismutase family.</text>
</comment>
<evidence type="ECO:0000250" key="1"/>
<evidence type="ECO:0000305" key="2"/>
<organism>
    <name type="scientific">Paulownia kawakamii</name>
    <name type="common">Dragon tree</name>
    <dbReference type="NCBI Taxonomy" id="70770"/>
    <lineage>
        <taxon>Eukaryota</taxon>
        <taxon>Viridiplantae</taxon>
        <taxon>Streptophyta</taxon>
        <taxon>Embryophyta</taxon>
        <taxon>Tracheophyta</taxon>
        <taxon>Spermatophyta</taxon>
        <taxon>Magnoliopsida</taxon>
        <taxon>eudicotyledons</taxon>
        <taxon>Gunneridae</taxon>
        <taxon>Pentapetalae</taxon>
        <taxon>asterids</taxon>
        <taxon>lamiids</taxon>
        <taxon>Lamiales</taxon>
        <taxon>Paulowniaceae</taxon>
        <taxon>Paulownia</taxon>
    </lineage>
</organism>
<feature type="chain" id="PRO_0000164151" description="Superoxide dismutase [Cu-Zn]">
    <location>
        <begin position="1"/>
        <end position="152"/>
    </location>
</feature>
<feature type="binding site" evidence="1">
    <location>
        <position position="45"/>
    </location>
    <ligand>
        <name>Cu cation</name>
        <dbReference type="ChEBI" id="CHEBI:23378"/>
        <note>catalytic</note>
    </ligand>
</feature>
<feature type="binding site" evidence="1">
    <location>
        <position position="47"/>
    </location>
    <ligand>
        <name>Cu cation</name>
        <dbReference type="ChEBI" id="CHEBI:23378"/>
        <note>catalytic</note>
    </ligand>
</feature>
<feature type="binding site" evidence="1">
    <location>
        <position position="62"/>
    </location>
    <ligand>
        <name>Cu cation</name>
        <dbReference type="ChEBI" id="CHEBI:23378"/>
        <note>catalytic</note>
    </ligand>
</feature>
<feature type="binding site" evidence="1">
    <location>
        <position position="62"/>
    </location>
    <ligand>
        <name>Zn(2+)</name>
        <dbReference type="ChEBI" id="CHEBI:29105"/>
        <note>structural</note>
    </ligand>
</feature>
<feature type="binding site" evidence="1">
    <location>
        <position position="70"/>
    </location>
    <ligand>
        <name>Zn(2+)</name>
        <dbReference type="ChEBI" id="CHEBI:29105"/>
        <note>structural</note>
    </ligand>
</feature>
<feature type="binding site" evidence="1">
    <location>
        <position position="79"/>
    </location>
    <ligand>
        <name>Zn(2+)</name>
        <dbReference type="ChEBI" id="CHEBI:29105"/>
        <note>structural</note>
    </ligand>
</feature>
<feature type="binding site" evidence="1">
    <location>
        <position position="82"/>
    </location>
    <ligand>
        <name>Zn(2+)</name>
        <dbReference type="ChEBI" id="CHEBI:29105"/>
        <note>structural</note>
    </ligand>
</feature>
<feature type="binding site" evidence="1">
    <location>
        <position position="119"/>
    </location>
    <ligand>
        <name>Cu cation</name>
        <dbReference type="ChEBI" id="CHEBI:23378"/>
        <note>catalytic</note>
    </ligand>
</feature>
<feature type="disulfide bond" evidence="1">
    <location>
        <begin position="56"/>
        <end position="145"/>
    </location>
</feature>
<gene>
    <name type="primary">SODCC</name>
    <name type="synonym">SOD5</name>
</gene>
<name>SODC_PAUKA</name>
<proteinExistence type="evidence at transcript level"/>
<accession>O49073</accession>
<dbReference type="EC" id="1.15.1.1"/>
<dbReference type="EMBL" id="AF037359">
    <property type="protein sequence ID" value="AAB92612.1"/>
    <property type="molecule type" value="mRNA"/>
</dbReference>
<dbReference type="SMR" id="O49073"/>
<dbReference type="GO" id="GO:0005737">
    <property type="term" value="C:cytoplasm"/>
    <property type="evidence" value="ECO:0007669"/>
    <property type="project" value="UniProtKB-SubCell"/>
</dbReference>
<dbReference type="GO" id="GO:0005507">
    <property type="term" value="F:copper ion binding"/>
    <property type="evidence" value="ECO:0007669"/>
    <property type="project" value="InterPro"/>
</dbReference>
<dbReference type="GO" id="GO:0004784">
    <property type="term" value="F:superoxide dismutase activity"/>
    <property type="evidence" value="ECO:0007669"/>
    <property type="project" value="UniProtKB-EC"/>
</dbReference>
<dbReference type="CDD" id="cd00305">
    <property type="entry name" value="Cu-Zn_Superoxide_Dismutase"/>
    <property type="match status" value="1"/>
</dbReference>
<dbReference type="FunFam" id="2.60.40.200:FF:000001">
    <property type="entry name" value="Superoxide dismutase [Cu-Zn]"/>
    <property type="match status" value="1"/>
</dbReference>
<dbReference type="Gene3D" id="2.60.40.200">
    <property type="entry name" value="Superoxide dismutase, copper/zinc binding domain"/>
    <property type="match status" value="1"/>
</dbReference>
<dbReference type="InterPro" id="IPR036423">
    <property type="entry name" value="SOD-like_Cu/Zn_dom_sf"/>
</dbReference>
<dbReference type="InterPro" id="IPR024134">
    <property type="entry name" value="SOD_Cu/Zn_/chaperone"/>
</dbReference>
<dbReference type="InterPro" id="IPR018152">
    <property type="entry name" value="SOD_Cu/Zn_BS"/>
</dbReference>
<dbReference type="InterPro" id="IPR001424">
    <property type="entry name" value="SOD_Cu_Zn_dom"/>
</dbReference>
<dbReference type="PANTHER" id="PTHR10003">
    <property type="entry name" value="SUPEROXIDE DISMUTASE CU-ZN -RELATED"/>
    <property type="match status" value="1"/>
</dbReference>
<dbReference type="Pfam" id="PF00080">
    <property type="entry name" value="Sod_Cu"/>
    <property type="match status" value="1"/>
</dbReference>
<dbReference type="PRINTS" id="PR00068">
    <property type="entry name" value="CUZNDISMTASE"/>
</dbReference>
<dbReference type="SUPFAM" id="SSF49329">
    <property type="entry name" value="Cu,Zn superoxide dismutase-like"/>
    <property type="match status" value="1"/>
</dbReference>
<dbReference type="PROSITE" id="PS00087">
    <property type="entry name" value="SOD_CU_ZN_1"/>
    <property type="match status" value="1"/>
</dbReference>